<evidence type="ECO:0000250" key="1"/>
<evidence type="ECO:0000255" key="2"/>
<evidence type="ECO:0000255" key="3">
    <source>
        <dbReference type="PROSITE-ProRule" id="PRU00521"/>
    </source>
</evidence>
<evidence type="ECO:0000269" key="4">
    <source>
    </source>
</evidence>
<evidence type="ECO:0000269" key="5">
    <source>
    </source>
</evidence>
<evidence type="ECO:0000305" key="6"/>
<name>GPR12_RAT</name>
<sequence>MNEDPKVNLSGLPRDCIEAGTPENISAAVPSQGSVVESEPELVVNPWDIVLCSSGTLICCENAVVVLIIFHSPSLRAPMFLLIGSLALADLLAGLGLIINFVFAYLLQSEATKLVTIGLIVASFSASVCSLLAITVDRYLSLYYALTYHSERTVTFTYVMLVMLWGTSTCLGLLPVMGWNCLRDESTCSVVRPLTKNNAAILSISFLFMFALMLQLYIQICKIVMRHAHQIALQHHFLATSHYVTTRKGISTLALILGTFAACWMPFTLYSLIADYTYPSIYTYATLLPATYNSIINPVIYAFRNQEIQKALCLICCGCIPNTLSQRARSPSDV</sequence>
<reference key="1">
    <citation type="journal article" date="1991" name="FEBS Lett.">
        <title>Cloning, sequencing and tissue distribution of a candidate G protein-coupled receptor from rat pituitary gland.</title>
        <authorList>
            <person name="Eidne K.A."/>
            <person name="Zabavnik J."/>
            <person name="Peters T."/>
            <person name="Yoshida S."/>
            <person name="Anderson L."/>
            <person name="Taylor P.L."/>
        </authorList>
    </citation>
    <scope>NUCLEOTIDE SEQUENCE [MRNA]</scope>
    <scope>TISSUE SPECIFICITY</scope>
    <source>
        <tissue>Pituitary</tissue>
    </source>
</reference>
<reference key="2">
    <citation type="submission" date="1994-07" db="EMBL/GenBank/DDBJ databases">
        <title>A putative rat G protein coupled receptor cDNA isolated from cerebral cortex.</title>
        <authorList>
            <person name="Bonner T.I."/>
            <person name="Brownstein M.J."/>
        </authorList>
    </citation>
    <scope>NUCLEOTIDE SEQUENCE [MRNA]</scope>
    <source>
        <tissue>Brain</tissue>
    </source>
</reference>
<reference key="3">
    <citation type="journal article" date="2004" name="Genome Res.">
        <title>The status, quality, and expansion of the NIH full-length cDNA project: the Mammalian Gene Collection (MGC).</title>
        <authorList>
            <consortium name="The MGC Project Team"/>
        </authorList>
    </citation>
    <scope>NUCLEOTIDE SEQUENCE [LARGE SCALE MRNA]</scope>
    <source>
        <tissue>Brain</tissue>
    </source>
</reference>
<reference key="4">
    <citation type="journal article" date="2007" name="J. Biol. Chem.">
        <title>Neural expression of G protein-coupled receptors GPR3, GPR6, and GPR12 up-regulates cyclic AMP levels and promotes neurite outgrowth.</title>
        <authorList>
            <person name="Tanaka S."/>
            <person name="Ishii K."/>
            <person name="Kasai K."/>
            <person name="Yoon S.O."/>
            <person name="Saeki Y."/>
        </authorList>
    </citation>
    <scope>FUNCTION</scope>
    <scope>TISSUE SPECIFICITY</scope>
</reference>
<organism>
    <name type="scientific">Rattus norvegicus</name>
    <name type="common">Rat</name>
    <dbReference type="NCBI Taxonomy" id="10116"/>
    <lineage>
        <taxon>Eukaryota</taxon>
        <taxon>Metazoa</taxon>
        <taxon>Chordata</taxon>
        <taxon>Craniata</taxon>
        <taxon>Vertebrata</taxon>
        <taxon>Euteleostomi</taxon>
        <taxon>Mammalia</taxon>
        <taxon>Eutheria</taxon>
        <taxon>Euarchontoglires</taxon>
        <taxon>Glires</taxon>
        <taxon>Rodentia</taxon>
        <taxon>Myomorpha</taxon>
        <taxon>Muroidea</taxon>
        <taxon>Muridae</taxon>
        <taxon>Murinae</taxon>
        <taxon>Rattus</taxon>
    </lineage>
</organism>
<accession>P30951</accession>
<accession>A0JPJ1</accession>
<gene>
    <name type="primary">Gpr12</name>
    <name type="synonym">Gpcr12</name>
</gene>
<keyword id="KW-1003">Cell membrane</keyword>
<keyword id="KW-0297">G-protein coupled receptor</keyword>
<keyword id="KW-0325">Glycoprotein</keyword>
<keyword id="KW-0449">Lipoprotein</keyword>
<keyword id="KW-0472">Membrane</keyword>
<keyword id="KW-0564">Palmitate</keyword>
<keyword id="KW-0597">Phosphoprotein</keyword>
<keyword id="KW-0675">Receptor</keyword>
<keyword id="KW-1185">Reference proteome</keyword>
<keyword id="KW-0807">Transducer</keyword>
<keyword id="KW-0812">Transmembrane</keyword>
<keyword id="KW-1133">Transmembrane helix</keyword>
<protein>
    <recommendedName>
        <fullName>G-protein coupled receptor 12</fullName>
    </recommendedName>
    <alternativeName>
        <fullName>R334</fullName>
    </alternativeName>
</protein>
<dbReference type="EMBL" id="X61496">
    <property type="protein sequence ID" value="CAA43713.1"/>
    <property type="status" value="ALT_FRAME"/>
    <property type="molecule type" value="mRNA"/>
</dbReference>
<dbReference type="EMBL" id="U12184">
    <property type="protein sequence ID" value="AAB60518.1"/>
    <property type="molecule type" value="mRNA"/>
</dbReference>
<dbReference type="EMBL" id="BC127447">
    <property type="protein sequence ID" value="AAI27448.1"/>
    <property type="molecule type" value="mRNA"/>
</dbReference>
<dbReference type="PIR" id="S18444">
    <property type="entry name" value="S18444"/>
</dbReference>
<dbReference type="RefSeq" id="NP_001032372.1">
    <property type="nucleotide sequence ID" value="NM_001037295.2"/>
</dbReference>
<dbReference type="RefSeq" id="NP_110458.1">
    <property type="nucleotide sequence ID" value="NM_030831.2"/>
</dbReference>
<dbReference type="RefSeq" id="XP_017453953.1">
    <property type="nucleotide sequence ID" value="XM_017598464.1"/>
</dbReference>
<dbReference type="SMR" id="P30951"/>
<dbReference type="FunCoup" id="P30951">
    <property type="interactions" value="283"/>
</dbReference>
<dbReference type="STRING" id="10116.ENSRNOP00000075912"/>
<dbReference type="GlyCosmos" id="P30951">
    <property type="glycosylation" value="2 sites, No reported glycans"/>
</dbReference>
<dbReference type="GlyGen" id="P30951">
    <property type="glycosylation" value="2 sites"/>
</dbReference>
<dbReference type="PhosphoSitePlus" id="P30951"/>
<dbReference type="PaxDb" id="10116-ENSRNOP00000057844"/>
<dbReference type="Ensembl" id="ENSRNOT00000061129.5">
    <property type="protein sequence ID" value="ENSRNOP00000057844.3"/>
    <property type="gene ID" value="ENSRNOG00000039832.5"/>
</dbReference>
<dbReference type="Ensembl" id="ENSRNOT00000092720.2">
    <property type="protein sequence ID" value="ENSRNOP00000075912.1"/>
    <property type="gene ID" value="ENSRNOG00000039832.5"/>
</dbReference>
<dbReference type="GeneID" id="80840"/>
<dbReference type="KEGG" id="rno:80840"/>
<dbReference type="AGR" id="RGD:68333"/>
<dbReference type="CTD" id="2835"/>
<dbReference type="RGD" id="68333">
    <property type="gene designation" value="Gpr12"/>
</dbReference>
<dbReference type="eggNOG" id="KOG3656">
    <property type="taxonomic scope" value="Eukaryota"/>
</dbReference>
<dbReference type="GeneTree" id="ENSGT01110000267224"/>
<dbReference type="HOGENOM" id="CLU_065071_0_0_1"/>
<dbReference type="InParanoid" id="P30951"/>
<dbReference type="OMA" id="ELIVNPW"/>
<dbReference type="PhylomeDB" id="P30951"/>
<dbReference type="PRO" id="PR:P30951"/>
<dbReference type="Proteomes" id="UP000002494">
    <property type="component" value="Chromosome 12"/>
</dbReference>
<dbReference type="Bgee" id="ENSRNOG00000039832">
    <property type="expression patterns" value="Expressed in Ammon's horn and 5 other cell types or tissues"/>
</dbReference>
<dbReference type="GO" id="GO:0005737">
    <property type="term" value="C:cytoplasm"/>
    <property type="evidence" value="ECO:0000318"/>
    <property type="project" value="GO_Central"/>
</dbReference>
<dbReference type="GO" id="GO:0005886">
    <property type="term" value="C:plasma membrane"/>
    <property type="evidence" value="ECO:0000318"/>
    <property type="project" value="GO_Central"/>
</dbReference>
<dbReference type="GO" id="GO:0004930">
    <property type="term" value="F:G protein-coupled receptor activity"/>
    <property type="evidence" value="ECO:0000318"/>
    <property type="project" value="GO_Central"/>
</dbReference>
<dbReference type="GO" id="GO:0031210">
    <property type="term" value="F:phosphatidylcholine binding"/>
    <property type="evidence" value="ECO:0000266"/>
    <property type="project" value="RGD"/>
</dbReference>
<dbReference type="GO" id="GO:0007189">
    <property type="term" value="P:adenylate cyclase-activating G protein-coupled receptor signaling pathway"/>
    <property type="evidence" value="ECO:0000318"/>
    <property type="project" value="GO_Central"/>
</dbReference>
<dbReference type="GO" id="GO:0007186">
    <property type="term" value="P:G protein-coupled receptor signaling pathway"/>
    <property type="evidence" value="ECO:0000266"/>
    <property type="project" value="RGD"/>
</dbReference>
<dbReference type="GO" id="GO:0006874">
    <property type="term" value="P:intracellular calcium ion homeostasis"/>
    <property type="evidence" value="ECO:0000266"/>
    <property type="project" value="RGD"/>
</dbReference>
<dbReference type="GO" id="GO:0019222">
    <property type="term" value="P:regulation of metabolic process"/>
    <property type="evidence" value="ECO:0000318"/>
    <property type="project" value="GO_Central"/>
</dbReference>
<dbReference type="CDD" id="cd15961">
    <property type="entry name" value="7tmA_GPR12"/>
    <property type="match status" value="1"/>
</dbReference>
<dbReference type="FunFam" id="1.20.1070.10:FF:000067">
    <property type="entry name" value="G-protein coupled receptor 12"/>
    <property type="match status" value="1"/>
</dbReference>
<dbReference type="Gene3D" id="1.20.1070.10">
    <property type="entry name" value="Rhodopsin 7-helix transmembrane proteins"/>
    <property type="match status" value="1"/>
</dbReference>
<dbReference type="InterPro" id="IPR000276">
    <property type="entry name" value="GPCR_Rhodpsn"/>
</dbReference>
<dbReference type="InterPro" id="IPR017452">
    <property type="entry name" value="GPCR_Rhodpsn_7TM"/>
</dbReference>
<dbReference type="InterPro" id="IPR000599">
    <property type="entry name" value="GPR12"/>
</dbReference>
<dbReference type="InterPro" id="IPR000723">
    <property type="entry name" value="GPR_3/6/12_orphan"/>
</dbReference>
<dbReference type="PANTHER" id="PTHR22750">
    <property type="entry name" value="G-PROTEIN COUPLED RECEPTOR"/>
    <property type="match status" value="1"/>
</dbReference>
<dbReference type="Pfam" id="PF00001">
    <property type="entry name" value="7tm_1"/>
    <property type="match status" value="1"/>
</dbReference>
<dbReference type="PRINTS" id="PR00237">
    <property type="entry name" value="GPCRRHODOPSN"/>
</dbReference>
<dbReference type="PRINTS" id="PR00650">
    <property type="entry name" value="GPR12ORPHANR"/>
</dbReference>
<dbReference type="PRINTS" id="PR00644">
    <property type="entry name" value="GPRORPHANR"/>
</dbReference>
<dbReference type="SMART" id="SM01381">
    <property type="entry name" value="7TM_GPCR_Srsx"/>
    <property type="match status" value="1"/>
</dbReference>
<dbReference type="SUPFAM" id="SSF81321">
    <property type="entry name" value="Family A G protein-coupled receptor-like"/>
    <property type="match status" value="1"/>
</dbReference>
<dbReference type="PROSITE" id="PS00237">
    <property type="entry name" value="G_PROTEIN_RECEP_F1_1"/>
    <property type="match status" value="1"/>
</dbReference>
<dbReference type="PROSITE" id="PS50262">
    <property type="entry name" value="G_PROTEIN_RECEP_F1_2"/>
    <property type="match status" value="1"/>
</dbReference>
<feature type="chain" id="PRO_0000069529" description="G-protein coupled receptor 12">
    <location>
        <begin position="1"/>
        <end position="334"/>
    </location>
</feature>
<feature type="topological domain" description="Extracellular" evidence="2">
    <location>
        <begin position="1"/>
        <end position="48"/>
    </location>
</feature>
<feature type="transmembrane region" description="Helical; Name=1" evidence="2">
    <location>
        <begin position="49"/>
        <end position="69"/>
    </location>
</feature>
<feature type="topological domain" description="Cytoplasmic" evidence="2">
    <location>
        <begin position="70"/>
        <end position="78"/>
    </location>
</feature>
<feature type="transmembrane region" description="Helical; Name=2" evidence="2">
    <location>
        <begin position="79"/>
        <end position="99"/>
    </location>
</feature>
<feature type="topological domain" description="Extracellular" evidence="2">
    <location>
        <begin position="100"/>
        <end position="113"/>
    </location>
</feature>
<feature type="transmembrane region" description="Helical; Name=3" evidence="2">
    <location>
        <begin position="114"/>
        <end position="134"/>
    </location>
</feature>
<feature type="topological domain" description="Cytoplasmic" evidence="2">
    <location>
        <begin position="135"/>
        <end position="158"/>
    </location>
</feature>
<feature type="transmembrane region" description="Helical; Name=4" evidence="2">
    <location>
        <begin position="159"/>
        <end position="179"/>
    </location>
</feature>
<feature type="topological domain" description="Extracellular" evidence="2">
    <location>
        <begin position="180"/>
        <end position="199"/>
    </location>
</feature>
<feature type="transmembrane region" description="Helical; Name=5" evidence="2">
    <location>
        <begin position="200"/>
        <end position="220"/>
    </location>
</feature>
<feature type="topological domain" description="Cytoplasmic" evidence="2">
    <location>
        <begin position="221"/>
        <end position="252"/>
    </location>
</feature>
<feature type="transmembrane region" description="Helical; Name=6" evidence="2">
    <location>
        <begin position="253"/>
        <end position="273"/>
    </location>
</feature>
<feature type="topological domain" description="Extracellular" evidence="2">
    <location>
        <begin position="274"/>
        <end position="282"/>
    </location>
</feature>
<feature type="transmembrane region" description="Helical; Name=7" evidence="2">
    <location>
        <begin position="283"/>
        <end position="303"/>
    </location>
</feature>
<feature type="topological domain" description="Cytoplasmic" evidence="2">
    <location>
        <begin position="304"/>
        <end position="334"/>
    </location>
</feature>
<feature type="modified residue" description="Phosphoserine" evidence="2">
    <location>
        <position position="330"/>
    </location>
</feature>
<feature type="modified residue" description="Phosphoserine" evidence="2">
    <location>
        <position position="332"/>
    </location>
</feature>
<feature type="lipid moiety-binding region" description="S-palmitoyl cysteine" evidence="1">
    <location>
        <position position="317"/>
    </location>
</feature>
<feature type="glycosylation site" description="N-linked (GlcNAc...) asparagine" evidence="2">
    <location>
        <position position="8"/>
    </location>
</feature>
<feature type="glycosylation site" description="N-linked (GlcNAc...) asparagine" evidence="2">
    <location>
        <position position="24"/>
    </location>
</feature>
<proteinExistence type="evidence at transcript level"/>
<comment type="function">
    <text evidence="4">Receptor with constitutive G(s) signaling activity that activates cyclic AMP. Promotes neurite outgrowth and blocks myelin inhibition in neurons.</text>
</comment>
<comment type="subcellular location">
    <subcellularLocation>
        <location evidence="6">Cell membrane</location>
        <topology evidence="6">Multi-pass membrane protein</topology>
    </subcellularLocation>
</comment>
<comment type="tissue specificity">
    <text evidence="4 5">Expressed in the brain, pituitary gland and testis.</text>
</comment>
<comment type="similarity">
    <text evidence="3">Belongs to the G-protein coupled receptor 1 family.</text>
</comment>
<comment type="sequence caution" evidence="6">
    <conflict type="frameshift">
        <sequence resource="EMBL-CDS" id="CAA43713"/>
    </conflict>
</comment>